<dbReference type="EC" id="2.7.7.6" evidence="1"/>
<dbReference type="EMBL" id="CP000721">
    <property type="protein sequence ID" value="ABR33324.1"/>
    <property type="molecule type" value="Genomic_DNA"/>
</dbReference>
<dbReference type="RefSeq" id="WP_011968482.1">
    <property type="nucleotide sequence ID" value="NC_009617.1"/>
</dbReference>
<dbReference type="SMR" id="A6LSJ4"/>
<dbReference type="GeneID" id="66344130"/>
<dbReference type="KEGG" id="cbe:Cbei_1142"/>
<dbReference type="eggNOG" id="COG1758">
    <property type="taxonomic scope" value="Bacteria"/>
</dbReference>
<dbReference type="HOGENOM" id="CLU_125406_6_1_9"/>
<dbReference type="Proteomes" id="UP000000565">
    <property type="component" value="Chromosome"/>
</dbReference>
<dbReference type="GO" id="GO:0000428">
    <property type="term" value="C:DNA-directed RNA polymerase complex"/>
    <property type="evidence" value="ECO:0007669"/>
    <property type="project" value="UniProtKB-KW"/>
</dbReference>
<dbReference type="GO" id="GO:0003677">
    <property type="term" value="F:DNA binding"/>
    <property type="evidence" value="ECO:0007669"/>
    <property type="project" value="UniProtKB-UniRule"/>
</dbReference>
<dbReference type="GO" id="GO:0003899">
    <property type="term" value="F:DNA-directed RNA polymerase activity"/>
    <property type="evidence" value="ECO:0007669"/>
    <property type="project" value="UniProtKB-UniRule"/>
</dbReference>
<dbReference type="GO" id="GO:0006351">
    <property type="term" value="P:DNA-templated transcription"/>
    <property type="evidence" value="ECO:0007669"/>
    <property type="project" value="UniProtKB-UniRule"/>
</dbReference>
<dbReference type="Gene3D" id="3.90.940.10">
    <property type="match status" value="1"/>
</dbReference>
<dbReference type="HAMAP" id="MF_00366">
    <property type="entry name" value="RNApol_bact_RpoZ"/>
    <property type="match status" value="1"/>
</dbReference>
<dbReference type="InterPro" id="IPR003716">
    <property type="entry name" value="DNA-dir_RNA_pol_omega"/>
</dbReference>
<dbReference type="InterPro" id="IPR006110">
    <property type="entry name" value="Pol_omega/Rpo6/RPB6"/>
</dbReference>
<dbReference type="InterPro" id="IPR036161">
    <property type="entry name" value="RPB6/omega-like_sf"/>
</dbReference>
<dbReference type="NCBIfam" id="TIGR00690">
    <property type="entry name" value="rpoZ"/>
    <property type="match status" value="1"/>
</dbReference>
<dbReference type="PANTHER" id="PTHR34476">
    <property type="entry name" value="DNA-DIRECTED RNA POLYMERASE SUBUNIT OMEGA"/>
    <property type="match status" value="1"/>
</dbReference>
<dbReference type="PANTHER" id="PTHR34476:SF1">
    <property type="entry name" value="DNA-DIRECTED RNA POLYMERASE SUBUNIT OMEGA"/>
    <property type="match status" value="1"/>
</dbReference>
<dbReference type="Pfam" id="PF01192">
    <property type="entry name" value="RNA_pol_Rpb6"/>
    <property type="match status" value="1"/>
</dbReference>
<dbReference type="SMART" id="SM01409">
    <property type="entry name" value="RNA_pol_Rpb6"/>
    <property type="match status" value="1"/>
</dbReference>
<dbReference type="SUPFAM" id="SSF63562">
    <property type="entry name" value="RPB6/omega subunit-like"/>
    <property type="match status" value="1"/>
</dbReference>
<feature type="chain" id="PRO_1000079622" description="DNA-directed RNA polymerase subunit omega">
    <location>
        <begin position="1"/>
        <end position="72"/>
    </location>
</feature>
<reference key="1">
    <citation type="submission" date="2007-06" db="EMBL/GenBank/DDBJ databases">
        <title>Complete sequence of Clostridium beijerinckii NCIMB 8052.</title>
        <authorList>
            <consortium name="US DOE Joint Genome Institute"/>
            <person name="Copeland A."/>
            <person name="Lucas S."/>
            <person name="Lapidus A."/>
            <person name="Barry K."/>
            <person name="Detter J.C."/>
            <person name="Glavina del Rio T."/>
            <person name="Hammon N."/>
            <person name="Israni S."/>
            <person name="Dalin E."/>
            <person name="Tice H."/>
            <person name="Pitluck S."/>
            <person name="Sims D."/>
            <person name="Brettin T."/>
            <person name="Bruce D."/>
            <person name="Tapia R."/>
            <person name="Brainard J."/>
            <person name="Schmutz J."/>
            <person name="Larimer F."/>
            <person name="Land M."/>
            <person name="Hauser L."/>
            <person name="Kyrpides N."/>
            <person name="Mikhailova N."/>
            <person name="Bennet G."/>
            <person name="Cann I."/>
            <person name="Chen J.-S."/>
            <person name="Contreras A.L."/>
            <person name="Jones D."/>
            <person name="Kashket E."/>
            <person name="Mitchell W."/>
            <person name="Stoddard S."/>
            <person name="Schwarz W."/>
            <person name="Qureshi N."/>
            <person name="Young M."/>
            <person name="Shi Z."/>
            <person name="Ezeji T."/>
            <person name="White B."/>
            <person name="Blaschek H."/>
            <person name="Richardson P."/>
        </authorList>
    </citation>
    <scope>NUCLEOTIDE SEQUENCE [LARGE SCALE GENOMIC DNA]</scope>
    <source>
        <strain>ATCC 51743 / NCIMB 8052</strain>
    </source>
</reference>
<organism>
    <name type="scientific">Clostridium beijerinckii (strain ATCC 51743 / NCIMB 8052)</name>
    <name type="common">Clostridium acetobutylicum</name>
    <dbReference type="NCBI Taxonomy" id="290402"/>
    <lineage>
        <taxon>Bacteria</taxon>
        <taxon>Bacillati</taxon>
        <taxon>Bacillota</taxon>
        <taxon>Clostridia</taxon>
        <taxon>Eubacteriales</taxon>
        <taxon>Clostridiaceae</taxon>
        <taxon>Clostridium</taxon>
    </lineage>
</organism>
<accession>A6LSJ4</accession>
<evidence type="ECO:0000255" key="1">
    <source>
        <dbReference type="HAMAP-Rule" id="MF_00366"/>
    </source>
</evidence>
<sequence length="72" mass="8092">MNNSMISPSVVDLLEKIHDRYSLVILTSKRARQIIEGAEPQISIKSNKPLTIAINEVDQDAVEFEILEEGLK</sequence>
<name>RPOZ_CLOB8</name>
<protein>
    <recommendedName>
        <fullName evidence="1">DNA-directed RNA polymerase subunit omega</fullName>
        <shortName evidence="1">RNAP omega subunit</shortName>
        <ecNumber evidence="1">2.7.7.6</ecNumber>
    </recommendedName>
    <alternativeName>
        <fullName evidence="1">RNA polymerase omega subunit</fullName>
    </alternativeName>
    <alternativeName>
        <fullName evidence="1">Transcriptase subunit omega</fullName>
    </alternativeName>
</protein>
<comment type="function">
    <text evidence="1">Promotes RNA polymerase assembly. Latches the N- and C-terminal regions of the beta' subunit thereby facilitating its interaction with the beta and alpha subunits.</text>
</comment>
<comment type="catalytic activity">
    <reaction evidence="1">
        <text>RNA(n) + a ribonucleoside 5'-triphosphate = RNA(n+1) + diphosphate</text>
        <dbReference type="Rhea" id="RHEA:21248"/>
        <dbReference type="Rhea" id="RHEA-COMP:14527"/>
        <dbReference type="Rhea" id="RHEA-COMP:17342"/>
        <dbReference type="ChEBI" id="CHEBI:33019"/>
        <dbReference type="ChEBI" id="CHEBI:61557"/>
        <dbReference type="ChEBI" id="CHEBI:140395"/>
        <dbReference type="EC" id="2.7.7.6"/>
    </reaction>
</comment>
<comment type="subunit">
    <text evidence="1">The RNAP catalytic core consists of 2 alpha, 1 beta, 1 beta' and 1 omega subunit. When a sigma factor is associated with the core the holoenzyme is formed, which can initiate transcription.</text>
</comment>
<comment type="similarity">
    <text evidence="1">Belongs to the RNA polymerase subunit omega family.</text>
</comment>
<gene>
    <name evidence="1" type="primary">rpoZ</name>
    <name type="ordered locus">Cbei_1142</name>
</gene>
<proteinExistence type="inferred from homology"/>
<keyword id="KW-0240">DNA-directed RNA polymerase</keyword>
<keyword id="KW-0548">Nucleotidyltransferase</keyword>
<keyword id="KW-0804">Transcription</keyword>
<keyword id="KW-0808">Transferase</keyword>